<protein>
    <recommendedName>
        <fullName>Uncharacterized protein ORF167</fullName>
    </recommendedName>
</protein>
<accession>Q3V4S3</accession>
<keyword id="KW-1185">Reference proteome</keyword>
<feature type="chain" id="PRO_0000389071" description="Uncharacterized protein ORF167">
    <location>
        <begin position="1"/>
        <end position="167"/>
    </location>
</feature>
<sequence>MNFEGFFTKEEMEKIKEEHDRDWRVGATYFKFNDDRITIFVFGYVPGDEFEYNMDLVISQIENVQFPVFCFTFYEKFSGEVMHLPVTKFCLNSLANNNEITFVFCDRIEEVKEKEAICTKERVLHMKNLVKEKAKQMLASFKEFDQNFVFREYIRTIKNPPPSCNPD</sequence>
<reference key="1">
    <citation type="journal article" date="2005" name="Nature">
        <title>Virology: independent virus development outside a host.</title>
        <authorList>
            <person name="Haring M."/>
            <person name="Vestergaard G."/>
            <person name="Rachel R."/>
            <person name="Chen L."/>
            <person name="Garrett R.A."/>
            <person name="Prangishvili D."/>
        </authorList>
    </citation>
    <scope>NUCLEOTIDE SEQUENCE [GENOMIC DNA]</scope>
</reference>
<organismHost>
    <name type="scientific">Acidianus convivator</name>
    <dbReference type="NCBI Taxonomy" id="269667"/>
</organismHost>
<proteinExistence type="predicted"/>
<dbReference type="EMBL" id="AJ888457">
    <property type="protein sequence ID" value="CAI59891.1"/>
    <property type="molecule type" value="Genomic_DNA"/>
</dbReference>
<dbReference type="RefSeq" id="YP_319854.1">
    <property type="nucleotide sequence ID" value="NC_007409.1"/>
</dbReference>
<dbReference type="SMR" id="Q3V4S3"/>
<dbReference type="GeneID" id="4484247"/>
<dbReference type="KEGG" id="vg:4484247"/>
<dbReference type="Proteomes" id="UP000002150">
    <property type="component" value="Genome"/>
</dbReference>
<organism>
    <name type="scientific">Acidianus two-tailed virus</name>
    <name type="common">ATV</name>
    <dbReference type="NCBI Taxonomy" id="315953"/>
    <lineage>
        <taxon>Viruses</taxon>
        <taxon>Viruses incertae sedis</taxon>
        <taxon>Bicaudaviridae</taxon>
        <taxon>Bicaudavirus</taxon>
    </lineage>
</organism>
<name>Y167_ATV</name>